<accession>B9K815</accession>
<protein>
    <recommendedName>
        <fullName evidence="1">V-type ATP synthase subunit D</fullName>
    </recommendedName>
    <alternativeName>
        <fullName evidence="1">V-ATPase subunit D</fullName>
    </alternativeName>
</protein>
<feature type="chain" id="PRO_1000173517" description="V-type ATP synthase subunit D">
    <location>
        <begin position="1"/>
        <end position="203"/>
    </location>
</feature>
<keyword id="KW-0066">ATP synthesis</keyword>
<keyword id="KW-0375">Hydrogen ion transport</keyword>
<keyword id="KW-0406">Ion transport</keyword>
<keyword id="KW-0813">Transport</keyword>
<gene>
    <name evidence="1" type="primary">atpD</name>
    <name type="ordered locus">CTN_0922</name>
</gene>
<dbReference type="EMBL" id="CP000916">
    <property type="protein sequence ID" value="ACM23098.1"/>
    <property type="molecule type" value="Genomic_DNA"/>
</dbReference>
<dbReference type="RefSeq" id="WP_015919415.1">
    <property type="nucleotide sequence ID" value="NC_011978.1"/>
</dbReference>
<dbReference type="SMR" id="B9K815"/>
<dbReference type="STRING" id="309803.CTN_0922"/>
<dbReference type="KEGG" id="tna:CTN_0922"/>
<dbReference type="eggNOG" id="COG1394">
    <property type="taxonomic scope" value="Bacteria"/>
</dbReference>
<dbReference type="HOGENOM" id="CLU_069688_2_0_0"/>
<dbReference type="Proteomes" id="UP000000445">
    <property type="component" value="Chromosome"/>
</dbReference>
<dbReference type="GO" id="GO:0005524">
    <property type="term" value="F:ATP binding"/>
    <property type="evidence" value="ECO:0007669"/>
    <property type="project" value="UniProtKB-UniRule"/>
</dbReference>
<dbReference type="GO" id="GO:0046933">
    <property type="term" value="F:proton-transporting ATP synthase activity, rotational mechanism"/>
    <property type="evidence" value="ECO:0007669"/>
    <property type="project" value="UniProtKB-UniRule"/>
</dbReference>
<dbReference type="GO" id="GO:0046961">
    <property type="term" value="F:proton-transporting ATPase activity, rotational mechanism"/>
    <property type="evidence" value="ECO:0007669"/>
    <property type="project" value="InterPro"/>
</dbReference>
<dbReference type="GO" id="GO:0042777">
    <property type="term" value="P:proton motive force-driven plasma membrane ATP synthesis"/>
    <property type="evidence" value="ECO:0007669"/>
    <property type="project" value="UniProtKB-UniRule"/>
</dbReference>
<dbReference type="Gene3D" id="1.10.287.3240">
    <property type="match status" value="1"/>
</dbReference>
<dbReference type="HAMAP" id="MF_00271">
    <property type="entry name" value="ATP_synth_D_arch"/>
    <property type="match status" value="1"/>
</dbReference>
<dbReference type="InterPro" id="IPR002699">
    <property type="entry name" value="V_ATPase_D"/>
</dbReference>
<dbReference type="NCBIfam" id="TIGR00309">
    <property type="entry name" value="V_ATPase_subD"/>
    <property type="match status" value="1"/>
</dbReference>
<dbReference type="PANTHER" id="PTHR11671">
    <property type="entry name" value="V-TYPE ATP SYNTHASE SUBUNIT D"/>
    <property type="match status" value="1"/>
</dbReference>
<dbReference type="Pfam" id="PF01813">
    <property type="entry name" value="ATP-synt_D"/>
    <property type="match status" value="1"/>
</dbReference>
<reference key="1">
    <citation type="submission" date="2007-11" db="EMBL/GenBank/DDBJ databases">
        <title>The genome sequence of the hyperthermophilic bacterium Thermotoga neapolitana.</title>
        <authorList>
            <person name="Lim S.K."/>
            <person name="Kim J.S."/>
            <person name="Cha S.H."/>
            <person name="Park B.C."/>
            <person name="Lee D.S."/>
            <person name="Tae H.S."/>
            <person name="Kim S.-J."/>
            <person name="Kim J.J."/>
            <person name="Park K.J."/>
            <person name="Lee S.Y."/>
        </authorList>
    </citation>
    <scope>NUCLEOTIDE SEQUENCE [LARGE SCALE GENOMIC DNA]</scope>
    <source>
        <strain>ATCC 49049 / DSM 4359 / NBRC 107923 / NS-E</strain>
    </source>
</reference>
<name>VATD_THENN</name>
<evidence type="ECO:0000255" key="1">
    <source>
        <dbReference type="HAMAP-Rule" id="MF_00271"/>
    </source>
</evidence>
<comment type="function">
    <text evidence="1">Produces ATP from ADP in the presence of a proton gradient across the membrane.</text>
</comment>
<comment type="similarity">
    <text evidence="1">Belongs to the V-ATPase D subunit family.</text>
</comment>
<proteinExistence type="inferred from homology"/>
<sequence length="203" mass="23550">MSVAPTRGNLIALKQQLRLAIQGYDLLERKRTVIMRELVGLIEEAKKLQEELLSTFEEAYRSLQKANLDLGIESVEEYASGIPEFKAMKIIFSSVMGVEVPEIQIERFETEIPYEIYSTNAALDQAYLVFRKALELVARVAVIENKVYRLAHEAKKTKKRVNALENLIIPHLKETIKYIQDTLEELEREELFRLKRLKEKVAR</sequence>
<organism>
    <name type="scientific">Thermotoga neapolitana (strain ATCC 49049 / DSM 4359 / NBRC 107923 / NS-E)</name>
    <dbReference type="NCBI Taxonomy" id="309803"/>
    <lineage>
        <taxon>Bacteria</taxon>
        <taxon>Thermotogati</taxon>
        <taxon>Thermotogota</taxon>
        <taxon>Thermotogae</taxon>
        <taxon>Thermotogales</taxon>
        <taxon>Thermotogaceae</taxon>
        <taxon>Thermotoga</taxon>
    </lineage>
</organism>